<reference key="1">
    <citation type="submission" date="2008-05" db="EMBL/GenBank/DDBJ databases">
        <title>Complete sequence of chromosome 1 of Ralstonia pickettii 12J.</title>
        <authorList>
            <person name="Lucas S."/>
            <person name="Copeland A."/>
            <person name="Lapidus A."/>
            <person name="Glavina del Rio T."/>
            <person name="Dalin E."/>
            <person name="Tice H."/>
            <person name="Bruce D."/>
            <person name="Goodwin L."/>
            <person name="Pitluck S."/>
            <person name="Meincke L."/>
            <person name="Brettin T."/>
            <person name="Detter J.C."/>
            <person name="Han C."/>
            <person name="Kuske C.R."/>
            <person name="Schmutz J."/>
            <person name="Larimer F."/>
            <person name="Land M."/>
            <person name="Hauser L."/>
            <person name="Kyrpides N."/>
            <person name="Mikhailova N."/>
            <person name="Marsh T."/>
            <person name="Richardson P."/>
        </authorList>
    </citation>
    <scope>NUCLEOTIDE SEQUENCE [LARGE SCALE GENOMIC DNA]</scope>
    <source>
        <strain>12J</strain>
    </source>
</reference>
<evidence type="ECO:0000255" key="1">
    <source>
        <dbReference type="HAMAP-Rule" id="MF_00452"/>
    </source>
</evidence>
<organism>
    <name type="scientific">Ralstonia pickettii (strain 12J)</name>
    <dbReference type="NCBI Taxonomy" id="402626"/>
    <lineage>
        <taxon>Bacteria</taxon>
        <taxon>Pseudomonadati</taxon>
        <taxon>Pseudomonadota</taxon>
        <taxon>Betaproteobacteria</taxon>
        <taxon>Burkholderiales</taxon>
        <taxon>Burkholderiaceae</taxon>
        <taxon>Ralstonia</taxon>
    </lineage>
</organism>
<keyword id="KW-0963">Cytoplasm</keyword>
<keyword id="KW-0210">Decarboxylase</keyword>
<keyword id="KW-0312">Gluconeogenesis</keyword>
<keyword id="KW-0342">GTP-binding</keyword>
<keyword id="KW-0456">Lyase</keyword>
<keyword id="KW-0464">Manganese</keyword>
<keyword id="KW-0479">Metal-binding</keyword>
<keyword id="KW-0547">Nucleotide-binding</keyword>
<feature type="chain" id="PRO_1000125047" description="Phosphoenolpyruvate carboxykinase [GTP]">
    <location>
        <begin position="1"/>
        <end position="622"/>
    </location>
</feature>
<feature type="active site" evidence="1">
    <location>
        <position position="277"/>
    </location>
</feature>
<feature type="binding site" evidence="1">
    <location>
        <position position="85"/>
    </location>
    <ligand>
        <name>substrate</name>
    </ligand>
</feature>
<feature type="binding site" evidence="1">
    <location>
        <begin position="224"/>
        <end position="226"/>
    </location>
    <ligand>
        <name>substrate</name>
    </ligand>
</feature>
<feature type="binding site" evidence="1">
    <location>
        <position position="233"/>
    </location>
    <ligand>
        <name>Mn(2+)</name>
        <dbReference type="ChEBI" id="CHEBI:29035"/>
    </ligand>
</feature>
<feature type="binding site" evidence="1">
    <location>
        <position position="253"/>
    </location>
    <ligand>
        <name>Mn(2+)</name>
        <dbReference type="ChEBI" id="CHEBI:29035"/>
    </ligand>
</feature>
<feature type="binding site" evidence="1">
    <location>
        <position position="275"/>
    </location>
    <ligand>
        <name>substrate</name>
    </ligand>
</feature>
<feature type="binding site" evidence="1">
    <location>
        <begin position="276"/>
        <end position="281"/>
    </location>
    <ligand>
        <name>GTP</name>
        <dbReference type="ChEBI" id="CHEBI:37565"/>
    </ligand>
</feature>
<feature type="binding site" evidence="1">
    <location>
        <position position="302"/>
    </location>
    <ligand>
        <name>Mn(2+)</name>
        <dbReference type="ChEBI" id="CHEBI:29035"/>
    </ligand>
</feature>
<feature type="binding site" evidence="1">
    <location>
        <begin position="400"/>
        <end position="402"/>
    </location>
    <ligand>
        <name>substrate</name>
    </ligand>
</feature>
<feature type="binding site" evidence="1">
    <location>
        <position position="402"/>
    </location>
    <ligand>
        <name>GTP</name>
        <dbReference type="ChEBI" id="CHEBI:37565"/>
    </ligand>
</feature>
<feature type="binding site" evidence="1">
    <location>
        <position position="433"/>
    </location>
    <ligand>
        <name>GTP</name>
        <dbReference type="ChEBI" id="CHEBI:37565"/>
    </ligand>
</feature>
<feature type="binding site" evidence="1">
    <location>
        <begin position="530"/>
        <end position="533"/>
    </location>
    <ligand>
        <name>GTP</name>
        <dbReference type="ChEBI" id="CHEBI:37565"/>
    </ligand>
</feature>
<comment type="function">
    <text evidence="1">Catalyzes the conversion of oxaloacetate (OAA) to phosphoenolpyruvate (PEP), the rate-limiting step in the metabolic pathway that produces glucose from lactate and other precursors derived from the citric acid cycle.</text>
</comment>
<comment type="catalytic activity">
    <reaction evidence="1">
        <text>oxaloacetate + GTP = phosphoenolpyruvate + GDP + CO2</text>
        <dbReference type="Rhea" id="RHEA:10388"/>
        <dbReference type="ChEBI" id="CHEBI:16452"/>
        <dbReference type="ChEBI" id="CHEBI:16526"/>
        <dbReference type="ChEBI" id="CHEBI:37565"/>
        <dbReference type="ChEBI" id="CHEBI:58189"/>
        <dbReference type="ChEBI" id="CHEBI:58702"/>
        <dbReference type="EC" id="4.1.1.32"/>
    </reaction>
</comment>
<comment type="cofactor">
    <cofactor evidence="1">
        <name>Mn(2+)</name>
        <dbReference type="ChEBI" id="CHEBI:29035"/>
    </cofactor>
    <text evidence="1">Binds 1 Mn(2+) ion per subunit.</text>
</comment>
<comment type="pathway">
    <text evidence="1">Carbohydrate biosynthesis; gluconeogenesis.</text>
</comment>
<comment type="subunit">
    <text evidence="1">Monomer.</text>
</comment>
<comment type="subcellular location">
    <subcellularLocation>
        <location evidence="1">Cytoplasm</location>
    </subcellularLocation>
</comment>
<comment type="similarity">
    <text evidence="1">Belongs to the phosphoenolpyruvate carboxykinase [GTP] family.</text>
</comment>
<gene>
    <name evidence="1" type="primary">pckG</name>
    <name type="ordered locus">Rpic_3739</name>
</gene>
<name>PCKG_RALPJ</name>
<sequence length="622" mass="68301">MNQPVMQGVPALNVPDYVKHPRLVAWVGEVAALTKPERIVWCDGSQEEYDRLCAEMVAAGTMKQLNPAKRKNSYLALSDPSDVARVEDRTFICSQKKEDAGPTNNWTAPAEMRQTLNGLFDGSMRGRTLYVVPFSMGPLGSPIAHIGVELSDSPYVAVNMRIMTRMGRAVYDVLGTDGDFVPCVHTVGKPLAAGEKDVPWPCNPTKYIVHFPETREIWSFGSGYGGNALLGKKCFALRIASTMGRDQGWLAEHMLILGVTSPEGKTYHVAAAFPSACGKTNFAMLIPPAGLNGWKVTTIGDDIAWIKPRQDANGKTRLYAINPEAGYFGVAPGTSEKTNFNAMATLKENVIFTNVALTDDGDVWWEGMTDTPPAHLIDWQGQDWTPASAKETGRKAAHPNARFTAPAAQCPSIDPEWDNPAGVPIDAFIFGGRRSTTVPLVTEARDWTEGVYMAATMGSETTAAAAGQQGVVRRDPFAMLPFCGYNMADYFAHWLKVGEKLADSGATLPKIFCVNWFRKDENGKFVWPGFGENMRVLKWMIDRIEGQAQGEEHVFGVSPRYEELSWDGLDFTAEQFAKVISLDADAWKQELALHDELFTKLAHGLPQALPDAKTRLEERLGG</sequence>
<dbReference type="EC" id="4.1.1.32" evidence="1"/>
<dbReference type="EMBL" id="CP001068">
    <property type="protein sequence ID" value="ACD28857.1"/>
    <property type="molecule type" value="Genomic_DNA"/>
</dbReference>
<dbReference type="SMR" id="B2U804"/>
<dbReference type="STRING" id="402626.Rpic_3739"/>
<dbReference type="KEGG" id="rpi:Rpic_3739"/>
<dbReference type="eggNOG" id="COG1274">
    <property type="taxonomic scope" value="Bacteria"/>
</dbReference>
<dbReference type="HOGENOM" id="CLU_028872_1_1_4"/>
<dbReference type="UniPathway" id="UPA00138"/>
<dbReference type="GO" id="GO:0005829">
    <property type="term" value="C:cytosol"/>
    <property type="evidence" value="ECO:0007669"/>
    <property type="project" value="TreeGrafter"/>
</dbReference>
<dbReference type="GO" id="GO:0005525">
    <property type="term" value="F:GTP binding"/>
    <property type="evidence" value="ECO:0007669"/>
    <property type="project" value="UniProtKB-UniRule"/>
</dbReference>
<dbReference type="GO" id="GO:0030145">
    <property type="term" value="F:manganese ion binding"/>
    <property type="evidence" value="ECO:0007669"/>
    <property type="project" value="UniProtKB-UniRule"/>
</dbReference>
<dbReference type="GO" id="GO:0004613">
    <property type="term" value="F:phosphoenolpyruvate carboxykinase (GTP) activity"/>
    <property type="evidence" value="ECO:0007669"/>
    <property type="project" value="UniProtKB-UniRule"/>
</dbReference>
<dbReference type="GO" id="GO:0071333">
    <property type="term" value="P:cellular response to glucose stimulus"/>
    <property type="evidence" value="ECO:0007669"/>
    <property type="project" value="TreeGrafter"/>
</dbReference>
<dbReference type="GO" id="GO:0006094">
    <property type="term" value="P:gluconeogenesis"/>
    <property type="evidence" value="ECO:0007669"/>
    <property type="project" value="UniProtKB-UniRule"/>
</dbReference>
<dbReference type="GO" id="GO:0046327">
    <property type="term" value="P:glycerol biosynthetic process from pyruvate"/>
    <property type="evidence" value="ECO:0007669"/>
    <property type="project" value="TreeGrafter"/>
</dbReference>
<dbReference type="GO" id="GO:0006107">
    <property type="term" value="P:oxaloacetate metabolic process"/>
    <property type="evidence" value="ECO:0007669"/>
    <property type="project" value="TreeGrafter"/>
</dbReference>
<dbReference type="GO" id="GO:0019543">
    <property type="term" value="P:propionate catabolic process"/>
    <property type="evidence" value="ECO:0007669"/>
    <property type="project" value="TreeGrafter"/>
</dbReference>
<dbReference type="GO" id="GO:0033993">
    <property type="term" value="P:response to lipid"/>
    <property type="evidence" value="ECO:0007669"/>
    <property type="project" value="TreeGrafter"/>
</dbReference>
<dbReference type="GO" id="GO:0042594">
    <property type="term" value="P:response to starvation"/>
    <property type="evidence" value="ECO:0007669"/>
    <property type="project" value="TreeGrafter"/>
</dbReference>
<dbReference type="CDD" id="cd00819">
    <property type="entry name" value="PEPCK_GTP"/>
    <property type="match status" value="1"/>
</dbReference>
<dbReference type="FunFam" id="3.40.449.10:FF:000005">
    <property type="entry name" value="Phosphoenolpyruvate carboxykinase [GTP]"/>
    <property type="match status" value="1"/>
</dbReference>
<dbReference type="Gene3D" id="3.90.228.20">
    <property type="match status" value="1"/>
</dbReference>
<dbReference type="Gene3D" id="3.40.449.10">
    <property type="entry name" value="Phosphoenolpyruvate Carboxykinase, domain 1"/>
    <property type="match status" value="1"/>
</dbReference>
<dbReference type="Gene3D" id="2.170.8.10">
    <property type="entry name" value="Phosphoenolpyruvate Carboxykinase, domain 2"/>
    <property type="match status" value="1"/>
</dbReference>
<dbReference type="HAMAP" id="MF_00452">
    <property type="entry name" value="PEPCK_GTP"/>
    <property type="match status" value="1"/>
</dbReference>
<dbReference type="InterPro" id="IPR018091">
    <property type="entry name" value="PEP_carboxykin_GTP_CS"/>
</dbReference>
<dbReference type="InterPro" id="IPR013035">
    <property type="entry name" value="PEP_carboxykinase_C"/>
</dbReference>
<dbReference type="InterPro" id="IPR008209">
    <property type="entry name" value="PEP_carboxykinase_GTP"/>
</dbReference>
<dbReference type="InterPro" id="IPR035077">
    <property type="entry name" value="PEP_carboxykinase_GTP_C"/>
</dbReference>
<dbReference type="InterPro" id="IPR035078">
    <property type="entry name" value="PEP_carboxykinase_GTP_N"/>
</dbReference>
<dbReference type="InterPro" id="IPR008210">
    <property type="entry name" value="PEP_carboxykinase_N"/>
</dbReference>
<dbReference type="NCBIfam" id="NF003253">
    <property type="entry name" value="PRK04210.1"/>
    <property type="match status" value="1"/>
</dbReference>
<dbReference type="PANTHER" id="PTHR11561">
    <property type="entry name" value="PHOSPHOENOLPYRUVATE CARBOXYKINASE"/>
    <property type="match status" value="1"/>
</dbReference>
<dbReference type="PANTHER" id="PTHR11561:SF0">
    <property type="entry name" value="PHOSPHOENOLPYRUVATE CARBOXYKINASE [GTP]-RELATED"/>
    <property type="match status" value="1"/>
</dbReference>
<dbReference type="Pfam" id="PF00821">
    <property type="entry name" value="PEPCK_GTP"/>
    <property type="match status" value="1"/>
</dbReference>
<dbReference type="Pfam" id="PF17297">
    <property type="entry name" value="PEPCK_N"/>
    <property type="match status" value="1"/>
</dbReference>
<dbReference type="PIRSF" id="PIRSF001348">
    <property type="entry name" value="PEP_carboxykinase_GTP"/>
    <property type="match status" value="1"/>
</dbReference>
<dbReference type="SUPFAM" id="SSF68923">
    <property type="entry name" value="PEP carboxykinase N-terminal domain"/>
    <property type="match status" value="1"/>
</dbReference>
<dbReference type="SUPFAM" id="SSF53795">
    <property type="entry name" value="PEP carboxykinase-like"/>
    <property type="match status" value="1"/>
</dbReference>
<dbReference type="PROSITE" id="PS00505">
    <property type="entry name" value="PEPCK_GTP"/>
    <property type="match status" value="1"/>
</dbReference>
<protein>
    <recommendedName>
        <fullName evidence="1">Phosphoenolpyruvate carboxykinase [GTP]</fullName>
        <shortName evidence="1">PEP carboxykinase</shortName>
        <shortName evidence="1">PEPCK</shortName>
        <ecNumber evidence="1">4.1.1.32</ecNumber>
    </recommendedName>
</protein>
<accession>B2U804</accession>
<proteinExistence type="inferred from homology"/>